<proteinExistence type="inferred from homology"/>
<name>ENO_DESDA</name>
<reference key="1">
    <citation type="submission" date="2009-01" db="EMBL/GenBank/DDBJ databases">
        <title>Complete sequence of Desulfovibrio desulfuricans subsp. desulfuricans str. ATCC 27774.</title>
        <authorList>
            <consortium name="US DOE Joint Genome Institute"/>
            <person name="Lucas S."/>
            <person name="Copeland A."/>
            <person name="Lapidus A."/>
            <person name="Glavina del Rio T."/>
            <person name="Tice H."/>
            <person name="Bruce D."/>
            <person name="Goodwin L."/>
            <person name="Pitluck S."/>
            <person name="Sims D."/>
            <person name="Lu M."/>
            <person name="Kiss H."/>
            <person name="Meineke L."/>
            <person name="Brettin T."/>
            <person name="Detter J.C."/>
            <person name="Han C."/>
            <person name="Larimer F."/>
            <person name="Land M."/>
            <person name="Hauser L."/>
            <person name="Kyrpides N."/>
            <person name="Ovchinnikova G."/>
            <person name="Hazen T.C."/>
        </authorList>
    </citation>
    <scope>NUCLEOTIDE SEQUENCE [LARGE SCALE GENOMIC DNA]</scope>
    <source>
        <strain>ATCC 27774 / DSM 6949 / MB</strain>
    </source>
</reference>
<keyword id="KW-0963">Cytoplasm</keyword>
<keyword id="KW-0324">Glycolysis</keyword>
<keyword id="KW-0456">Lyase</keyword>
<keyword id="KW-0460">Magnesium</keyword>
<keyword id="KW-0479">Metal-binding</keyword>
<keyword id="KW-0964">Secreted</keyword>
<organism>
    <name type="scientific">Desulfovibrio desulfuricans (strain ATCC 27774 / DSM 6949 / MB)</name>
    <dbReference type="NCBI Taxonomy" id="525146"/>
    <lineage>
        <taxon>Bacteria</taxon>
        <taxon>Pseudomonadati</taxon>
        <taxon>Thermodesulfobacteriota</taxon>
        <taxon>Desulfovibrionia</taxon>
        <taxon>Desulfovibrionales</taxon>
        <taxon>Desulfovibrionaceae</taxon>
        <taxon>Desulfovibrio</taxon>
    </lineage>
</organism>
<feature type="chain" id="PRO_1000132999" description="Enolase">
    <location>
        <begin position="1"/>
        <end position="432"/>
    </location>
</feature>
<feature type="active site" description="Proton donor" evidence="1">
    <location>
        <position position="205"/>
    </location>
</feature>
<feature type="active site" description="Proton acceptor" evidence="1">
    <location>
        <position position="337"/>
    </location>
</feature>
<feature type="binding site" evidence="1">
    <location>
        <position position="163"/>
    </location>
    <ligand>
        <name>(2R)-2-phosphoglycerate</name>
        <dbReference type="ChEBI" id="CHEBI:58289"/>
    </ligand>
</feature>
<feature type="binding site" evidence="1">
    <location>
        <position position="242"/>
    </location>
    <ligand>
        <name>Mg(2+)</name>
        <dbReference type="ChEBI" id="CHEBI:18420"/>
    </ligand>
</feature>
<feature type="binding site" evidence="1">
    <location>
        <position position="285"/>
    </location>
    <ligand>
        <name>Mg(2+)</name>
        <dbReference type="ChEBI" id="CHEBI:18420"/>
    </ligand>
</feature>
<feature type="binding site" evidence="1">
    <location>
        <position position="312"/>
    </location>
    <ligand>
        <name>Mg(2+)</name>
        <dbReference type="ChEBI" id="CHEBI:18420"/>
    </ligand>
</feature>
<feature type="binding site" evidence="1">
    <location>
        <position position="337"/>
    </location>
    <ligand>
        <name>(2R)-2-phosphoglycerate</name>
        <dbReference type="ChEBI" id="CHEBI:58289"/>
    </ligand>
</feature>
<feature type="binding site" evidence="1">
    <location>
        <position position="366"/>
    </location>
    <ligand>
        <name>(2R)-2-phosphoglycerate</name>
        <dbReference type="ChEBI" id="CHEBI:58289"/>
    </ligand>
</feature>
<feature type="binding site" evidence="1">
    <location>
        <position position="367"/>
    </location>
    <ligand>
        <name>(2R)-2-phosphoglycerate</name>
        <dbReference type="ChEBI" id="CHEBI:58289"/>
    </ligand>
</feature>
<feature type="binding site" evidence="1">
    <location>
        <position position="388"/>
    </location>
    <ligand>
        <name>(2R)-2-phosphoglycerate</name>
        <dbReference type="ChEBI" id="CHEBI:58289"/>
    </ligand>
</feature>
<gene>
    <name evidence="1" type="primary">eno</name>
    <name type="ordered locus">Ddes_2216</name>
</gene>
<sequence>MSSIASVFGREILDSRGNPTVEVEVTLESGLRARAAVPSGASTGSREALEMRDGDKARYCGKGVTKAVDHVNSEIADALLGMDSLRQVQIDNTLIDLDGTDNKSRLGANAMLGVSMACARVAASFLGLPLYKYLGGINAKVLPAPMMNIINGGAHAPNNLDIQEFMIMPVGAMTFRDSLRMGTEIFHMLQAILKKDGHVTSVGDEGGFAPNLKNHDEAFAYIIKAIEEAGYNPGTEVALAIDAASSEFYKDGKYVLAGEGKTFNSAELSEWMAEFTRKYPLISIEDGMAESDWDGWGMLTASLGDHVQLVGDDVFVTNPSILAEGIAEGVANSILIKLNQIGTVTETLDTIEMAKEAAYTTVISHRSGETEDSFIADLAVGVNSGQIKTGSLCRSERMSKYNQLLRIEEELGDDAEFFGPMLAEYYSLGTEE</sequence>
<comment type="function">
    <text evidence="1">Catalyzes the reversible conversion of 2-phosphoglycerate (2-PG) into phosphoenolpyruvate (PEP). It is essential for the degradation of carbohydrates via glycolysis.</text>
</comment>
<comment type="catalytic activity">
    <reaction evidence="1">
        <text>(2R)-2-phosphoglycerate = phosphoenolpyruvate + H2O</text>
        <dbReference type="Rhea" id="RHEA:10164"/>
        <dbReference type="ChEBI" id="CHEBI:15377"/>
        <dbReference type="ChEBI" id="CHEBI:58289"/>
        <dbReference type="ChEBI" id="CHEBI:58702"/>
        <dbReference type="EC" id="4.2.1.11"/>
    </reaction>
</comment>
<comment type="cofactor">
    <cofactor evidence="1">
        <name>Mg(2+)</name>
        <dbReference type="ChEBI" id="CHEBI:18420"/>
    </cofactor>
    <text evidence="1">Binds a second Mg(2+) ion via substrate during catalysis.</text>
</comment>
<comment type="pathway">
    <text evidence="1">Carbohydrate degradation; glycolysis; pyruvate from D-glyceraldehyde 3-phosphate: step 4/5.</text>
</comment>
<comment type="subcellular location">
    <subcellularLocation>
        <location evidence="1">Cytoplasm</location>
    </subcellularLocation>
    <subcellularLocation>
        <location evidence="1">Secreted</location>
    </subcellularLocation>
    <subcellularLocation>
        <location evidence="1">Cell surface</location>
    </subcellularLocation>
    <text evidence="1">Fractions of enolase are present in both the cytoplasm and on the cell surface.</text>
</comment>
<comment type="similarity">
    <text evidence="1">Belongs to the enolase family.</text>
</comment>
<protein>
    <recommendedName>
        <fullName evidence="1">Enolase</fullName>
        <ecNumber evidence="1">4.2.1.11</ecNumber>
    </recommendedName>
    <alternativeName>
        <fullName evidence="1">2-phospho-D-glycerate hydro-lyase</fullName>
    </alternativeName>
    <alternativeName>
        <fullName evidence="1">2-phosphoglycerate dehydratase</fullName>
    </alternativeName>
</protein>
<accession>B8J467</accession>
<dbReference type="EC" id="4.2.1.11" evidence="1"/>
<dbReference type="EMBL" id="CP001358">
    <property type="protein sequence ID" value="ACL50112.1"/>
    <property type="molecule type" value="Genomic_DNA"/>
</dbReference>
<dbReference type="SMR" id="B8J467"/>
<dbReference type="STRING" id="525146.Ddes_2216"/>
<dbReference type="KEGG" id="dds:Ddes_2216"/>
<dbReference type="eggNOG" id="COG0148">
    <property type="taxonomic scope" value="Bacteria"/>
</dbReference>
<dbReference type="HOGENOM" id="CLU_031223_2_1_7"/>
<dbReference type="UniPathway" id="UPA00109">
    <property type="reaction ID" value="UER00187"/>
</dbReference>
<dbReference type="GO" id="GO:0009986">
    <property type="term" value="C:cell surface"/>
    <property type="evidence" value="ECO:0007669"/>
    <property type="project" value="UniProtKB-SubCell"/>
</dbReference>
<dbReference type="GO" id="GO:0005576">
    <property type="term" value="C:extracellular region"/>
    <property type="evidence" value="ECO:0007669"/>
    <property type="project" value="UniProtKB-SubCell"/>
</dbReference>
<dbReference type="GO" id="GO:0000015">
    <property type="term" value="C:phosphopyruvate hydratase complex"/>
    <property type="evidence" value="ECO:0007669"/>
    <property type="project" value="InterPro"/>
</dbReference>
<dbReference type="GO" id="GO:0000287">
    <property type="term" value="F:magnesium ion binding"/>
    <property type="evidence" value="ECO:0007669"/>
    <property type="project" value="UniProtKB-UniRule"/>
</dbReference>
<dbReference type="GO" id="GO:0004634">
    <property type="term" value="F:phosphopyruvate hydratase activity"/>
    <property type="evidence" value="ECO:0007669"/>
    <property type="project" value="UniProtKB-UniRule"/>
</dbReference>
<dbReference type="GO" id="GO:0006096">
    <property type="term" value="P:glycolytic process"/>
    <property type="evidence" value="ECO:0007669"/>
    <property type="project" value="UniProtKB-UniRule"/>
</dbReference>
<dbReference type="CDD" id="cd03313">
    <property type="entry name" value="enolase"/>
    <property type="match status" value="1"/>
</dbReference>
<dbReference type="FunFam" id="3.20.20.120:FF:000001">
    <property type="entry name" value="Enolase"/>
    <property type="match status" value="1"/>
</dbReference>
<dbReference type="FunFam" id="3.30.390.10:FF:000001">
    <property type="entry name" value="Enolase"/>
    <property type="match status" value="1"/>
</dbReference>
<dbReference type="Gene3D" id="3.20.20.120">
    <property type="entry name" value="Enolase-like C-terminal domain"/>
    <property type="match status" value="1"/>
</dbReference>
<dbReference type="Gene3D" id="3.30.390.10">
    <property type="entry name" value="Enolase-like, N-terminal domain"/>
    <property type="match status" value="1"/>
</dbReference>
<dbReference type="HAMAP" id="MF_00318">
    <property type="entry name" value="Enolase"/>
    <property type="match status" value="1"/>
</dbReference>
<dbReference type="InterPro" id="IPR000941">
    <property type="entry name" value="Enolase"/>
</dbReference>
<dbReference type="InterPro" id="IPR036849">
    <property type="entry name" value="Enolase-like_C_sf"/>
</dbReference>
<dbReference type="InterPro" id="IPR029017">
    <property type="entry name" value="Enolase-like_N"/>
</dbReference>
<dbReference type="InterPro" id="IPR020810">
    <property type="entry name" value="Enolase_C"/>
</dbReference>
<dbReference type="InterPro" id="IPR020809">
    <property type="entry name" value="Enolase_CS"/>
</dbReference>
<dbReference type="InterPro" id="IPR020811">
    <property type="entry name" value="Enolase_N"/>
</dbReference>
<dbReference type="NCBIfam" id="TIGR01060">
    <property type="entry name" value="eno"/>
    <property type="match status" value="1"/>
</dbReference>
<dbReference type="PANTHER" id="PTHR11902">
    <property type="entry name" value="ENOLASE"/>
    <property type="match status" value="1"/>
</dbReference>
<dbReference type="PANTHER" id="PTHR11902:SF1">
    <property type="entry name" value="ENOLASE"/>
    <property type="match status" value="1"/>
</dbReference>
<dbReference type="Pfam" id="PF00113">
    <property type="entry name" value="Enolase_C"/>
    <property type="match status" value="1"/>
</dbReference>
<dbReference type="Pfam" id="PF03952">
    <property type="entry name" value="Enolase_N"/>
    <property type="match status" value="1"/>
</dbReference>
<dbReference type="PIRSF" id="PIRSF001400">
    <property type="entry name" value="Enolase"/>
    <property type="match status" value="1"/>
</dbReference>
<dbReference type="PRINTS" id="PR00148">
    <property type="entry name" value="ENOLASE"/>
</dbReference>
<dbReference type="SFLD" id="SFLDF00002">
    <property type="entry name" value="enolase"/>
    <property type="match status" value="1"/>
</dbReference>
<dbReference type="SFLD" id="SFLDG00178">
    <property type="entry name" value="enolase"/>
    <property type="match status" value="1"/>
</dbReference>
<dbReference type="SMART" id="SM01192">
    <property type="entry name" value="Enolase_C"/>
    <property type="match status" value="1"/>
</dbReference>
<dbReference type="SMART" id="SM01193">
    <property type="entry name" value="Enolase_N"/>
    <property type="match status" value="1"/>
</dbReference>
<dbReference type="SUPFAM" id="SSF51604">
    <property type="entry name" value="Enolase C-terminal domain-like"/>
    <property type="match status" value="1"/>
</dbReference>
<dbReference type="SUPFAM" id="SSF54826">
    <property type="entry name" value="Enolase N-terminal domain-like"/>
    <property type="match status" value="1"/>
</dbReference>
<dbReference type="PROSITE" id="PS00164">
    <property type="entry name" value="ENOLASE"/>
    <property type="match status" value="1"/>
</dbReference>
<evidence type="ECO:0000255" key="1">
    <source>
        <dbReference type="HAMAP-Rule" id="MF_00318"/>
    </source>
</evidence>